<protein>
    <recommendedName>
        <fullName>Transmembrane and ubiquitin-like domain-containing protein 1</fullName>
    </recommendedName>
    <alternativeName>
        <fullName>Hepatocyte odd protein shuttling protein</fullName>
    </alternativeName>
    <component>
        <recommendedName>
            <fullName evidence="12">iHOPS</fullName>
        </recommendedName>
    </component>
</protein>
<name>TMUB1_MOUSE</name>
<comment type="function">
    <text evidence="1 2 6 7 10">Involved in sterol-regulated ubiquitination and degradation of HMG-CoA reductase HMGCR (By similarity). Involved in positive regulation of AMPA-selective glutamate receptor GRIA2 recycling to the cell surface (By similarity). Acts as a negative regulator of hepatocyte growth during regeneration (By similarity).</text>
</comment>
<comment type="function">
    <molecule>iHOPS</molecule>
    <text evidence="7 10">May contribute to the regulation of translation during cell-cycle progression. May contribute to the regulation of cell proliferation (PubMed:16014383). May be involved in centrosome assembly (PubMed:18418082). Modulates stabilization and nucleolar localization of tumor suppressor CDKN2A and enhances association between CDKN2A and NPM1 (PubMed:22890319).</text>
</comment>
<comment type="subunit">
    <text evidence="1 2 6 8 9 10 11">Interacts with EEF1A1, CAMLG, GRIA2 and GRIP1. Interacts with NPM1 and CDKN2A; TMUB1 can enhance interaction between NPM1 and CDKN2A and is proposed to bridge the proteins; proposed to be mediated by iHOPS (PubMed:16014383, PubMed:18665261, PubMed:20582322, PubMed:22890319, PubMed:24240191). Interacts with TUBG1 (By similarity). Interacts with ERLIN2 and AMFR; TMUB1 promotes the interaction of ERLIN2 with AMFR (By similarity).</text>
</comment>
<comment type="subcellular location">
    <subcellularLocation>
        <location evidence="8">Membrane</location>
        <topology evidence="13">Multi-pass membrane protein</topology>
    </subcellularLocation>
    <subcellularLocation>
        <location evidence="8">Postsynaptic cell membrane</location>
    </subcellularLocation>
    <subcellularLocation>
        <location evidence="1">Recycling endosome</location>
    </subcellularLocation>
    <subcellularLocation>
        <location evidence="6 9">Cytoplasm</location>
    </subcellularLocation>
    <subcellularLocation>
        <location evidence="6">Nucleus</location>
    </subcellularLocation>
    <subcellularLocation>
        <location evidence="10">Nucleus</location>
        <location evidence="10">Nucleolus</location>
    </subcellularLocation>
</comment>
<comment type="subcellular location">
    <molecule>Isoform 1</molecule>
    <subcellularLocation>
        <location evidence="1 14">Membrane</location>
    </subcellularLocation>
</comment>
<comment type="subcellular location">
    <molecule>Isoform 2</molecule>
    <subcellularLocation>
        <location evidence="1 14">Membrane</location>
    </subcellularLocation>
</comment>
<comment type="subcellular location">
    <molecule>iHOPS</molecule>
    <subcellularLocation>
        <location evidence="1 14">Cytoplasm</location>
    </subcellularLocation>
    <subcellularLocation>
        <location evidence="14">Cytoplasm</location>
        <location evidence="14">Cytoskeleton</location>
        <location evidence="14">Microtubule organizing center</location>
        <location evidence="14">Centrosome</location>
    </subcellularLocation>
    <subcellularLocation>
        <location evidence="14">Nucleus</location>
        <location evidence="14">Nucleolus</location>
    </subcellularLocation>
    <subcellularLocation>
        <location evidence="14">Nucleus</location>
    </subcellularLocation>
    <text evidence="6 14">iHOPS is proposed to be the shuttling form across different cellular compartments (PubMed:24240191). XPO1-dependent exported from the nucleus in dividing cells. Predominantly nuclear during growth arrest (PubMed:16014383).</text>
</comment>
<comment type="alternative products">
    <event type="alternative initiation"/>
    <isoform>
        <id>Q9JMG3-1</id>
        <name>1</name>
        <name>lHOPS</name>
        <sequence type="displayed"/>
    </isoform>
    <isoform>
        <id>Q9JMG3-2</id>
        <name>2</name>
        <name>sHOPS</name>
        <sequence type="described" ref="VSP_058102"/>
    </isoform>
</comment>
<comment type="tissue specificity">
    <text evidence="9 11">Expressed in adult brain; at protein level (PubMed:18665261, PubMed:20582322). Isoform 1 (lHOPS) is highly expressed in small intestine, stomach and epididymis. Isoform 2 (sHOPS) and iHOPS are abundantly expressed in brain, liver and adrenal gland (PubMed:24240191).</text>
</comment>
<comment type="induction">
    <text evidence="6">Up-regulated in regenerating liver.</text>
</comment>
<comment type="PTM">
    <molecule>iHOPS</molecule>
    <text evidence="11">Isoform 1 (lHOPS) is processed by regulated intramembrane proteolysis (RIP) in the N-terminus to release iHOPS from membranes.</text>
</comment>
<comment type="PTM">
    <text evidence="11">Isoform 2 seems to undergo a selective cleavage in the C-terminal region to release an additional cytoplasmic form.</text>
</comment>
<comment type="disruption phenotype">
    <text evidence="9">Strong increase in home cage locomotor activity during the dark phase (subjective day) of the light:dark (L:D) cycle. There were no changes in activity during the light period and in locomotor activity observed in other assays, e.g. novel open-field.</text>
</comment>
<dbReference type="EMBL" id="AB030183">
    <property type="protein sequence ID" value="BAA92747.1"/>
    <property type="molecule type" value="mRNA"/>
</dbReference>
<dbReference type="EMBL" id="AY603379">
    <property type="protein sequence ID" value="AAU00155.1"/>
    <property type="molecule type" value="mRNA"/>
</dbReference>
<dbReference type="EMBL" id="AK008109">
    <property type="protein sequence ID" value="BAB25465.1"/>
    <property type="molecule type" value="mRNA"/>
</dbReference>
<dbReference type="EMBL" id="BC019547">
    <property type="protein sequence ID" value="AAH19547.1"/>
    <property type="molecule type" value="mRNA"/>
</dbReference>
<dbReference type="CCDS" id="CCDS19121.1">
    <molecule id="Q9JMG3-1"/>
</dbReference>
<dbReference type="RefSeq" id="NP_071863.1">
    <molecule id="Q9JMG3-1"/>
    <property type="nucleotide sequence ID" value="NM_022418.4"/>
</dbReference>
<dbReference type="RefSeq" id="XP_006535849.1">
    <molecule id="Q9JMG3-1"/>
    <property type="nucleotide sequence ID" value="XM_006535786.3"/>
</dbReference>
<dbReference type="SMR" id="Q9JMG3"/>
<dbReference type="BioGRID" id="211057">
    <property type="interactions" value="3"/>
</dbReference>
<dbReference type="FunCoup" id="Q9JMG3">
    <property type="interactions" value="492"/>
</dbReference>
<dbReference type="IntAct" id="Q9JMG3">
    <property type="interactions" value="2"/>
</dbReference>
<dbReference type="STRING" id="10090.ENSMUSP00000110685"/>
<dbReference type="GlyGen" id="Q9JMG3">
    <property type="glycosylation" value="1 site, 1 N-linked glycan (1 site)"/>
</dbReference>
<dbReference type="iPTMnet" id="Q9JMG3"/>
<dbReference type="PhosphoSitePlus" id="Q9JMG3"/>
<dbReference type="PaxDb" id="10090-ENSMUSP00000030799"/>
<dbReference type="ProteomicsDB" id="259057">
    <molecule id="Q9JMG3-1"/>
</dbReference>
<dbReference type="ProteomicsDB" id="259058">
    <molecule id="Q9JMG3-2"/>
</dbReference>
<dbReference type="Pumba" id="Q9JMG3"/>
<dbReference type="Antibodypedia" id="32973">
    <property type="antibodies" value="105 antibodies from 17 providers"/>
</dbReference>
<dbReference type="DNASU" id="64295"/>
<dbReference type="Ensembl" id="ENSMUST00000030799.15">
    <molecule id="Q9JMG3-1"/>
    <property type="protein sequence ID" value="ENSMUSP00000030799.9"/>
    <property type="gene ID" value="ENSMUSG00000028958.16"/>
</dbReference>
<dbReference type="Ensembl" id="ENSMUST00000115033.8">
    <molecule id="Q9JMG3-1"/>
    <property type="protein sequence ID" value="ENSMUSP00000110685.2"/>
    <property type="gene ID" value="ENSMUSG00000028958.16"/>
</dbReference>
<dbReference type="GeneID" id="64295"/>
<dbReference type="KEGG" id="mmu:64295"/>
<dbReference type="UCSC" id="uc008wrt.2">
    <molecule id="Q9JMG3-1"/>
    <property type="organism name" value="mouse"/>
</dbReference>
<dbReference type="AGR" id="MGI:1923764"/>
<dbReference type="CTD" id="83590"/>
<dbReference type="MGI" id="MGI:1923764">
    <property type="gene designation" value="Tmub1"/>
</dbReference>
<dbReference type="VEuPathDB" id="HostDB:ENSMUSG00000028958"/>
<dbReference type="eggNOG" id="ENOG502QU8U">
    <property type="taxonomic scope" value="Eukaryota"/>
</dbReference>
<dbReference type="GeneTree" id="ENSGT00390000014069"/>
<dbReference type="HOGENOM" id="CLU_053940_1_0_1"/>
<dbReference type="InParanoid" id="Q9JMG3"/>
<dbReference type="OMA" id="TLLWYCQ"/>
<dbReference type="OrthoDB" id="82430at9989"/>
<dbReference type="PhylomeDB" id="Q9JMG3"/>
<dbReference type="TreeFam" id="TF329265"/>
<dbReference type="BioGRID-ORCS" id="64295">
    <property type="hits" value="2 hits in 77 CRISPR screens"/>
</dbReference>
<dbReference type="CD-CODE" id="01CA17F3">
    <property type="entry name" value="Centrosome"/>
</dbReference>
<dbReference type="ChiTaRS" id="Tmub1">
    <property type="organism name" value="mouse"/>
</dbReference>
<dbReference type="PRO" id="PR:Q9JMG3"/>
<dbReference type="Proteomes" id="UP000000589">
    <property type="component" value="Chromosome 5"/>
</dbReference>
<dbReference type="RNAct" id="Q9JMG3">
    <property type="molecule type" value="protein"/>
</dbReference>
<dbReference type="Bgee" id="ENSMUSG00000028958">
    <property type="expression patterns" value="Expressed in hindlimb stylopod muscle and 95 other cell types or tissues"/>
</dbReference>
<dbReference type="ExpressionAtlas" id="Q9JMG3">
    <property type="expression patterns" value="baseline and differential"/>
</dbReference>
<dbReference type="GO" id="GO:0005813">
    <property type="term" value="C:centrosome"/>
    <property type="evidence" value="ECO:0007669"/>
    <property type="project" value="UniProtKB-SubCell"/>
</dbReference>
<dbReference type="GO" id="GO:0005730">
    <property type="term" value="C:nucleolus"/>
    <property type="evidence" value="ECO:0007669"/>
    <property type="project" value="UniProtKB-SubCell"/>
</dbReference>
<dbReference type="GO" id="GO:0045211">
    <property type="term" value="C:postsynaptic membrane"/>
    <property type="evidence" value="ECO:0007669"/>
    <property type="project" value="UniProtKB-SubCell"/>
</dbReference>
<dbReference type="GO" id="GO:0055037">
    <property type="term" value="C:recycling endosome"/>
    <property type="evidence" value="ECO:0007669"/>
    <property type="project" value="UniProtKB-SubCell"/>
</dbReference>
<dbReference type="GO" id="GO:0036503">
    <property type="term" value="P:ERAD pathway"/>
    <property type="evidence" value="ECO:0007669"/>
    <property type="project" value="InterPro"/>
</dbReference>
<dbReference type="CDD" id="cd17131">
    <property type="entry name" value="Ubl_TMUB1"/>
    <property type="match status" value="1"/>
</dbReference>
<dbReference type="FunFam" id="3.10.20.90:FF:000181">
    <property type="entry name" value="transmembrane and ubiquitin-like domain-containing protein 1"/>
    <property type="match status" value="1"/>
</dbReference>
<dbReference type="Gene3D" id="3.10.20.90">
    <property type="entry name" value="Phosphatidylinositol 3-kinase Catalytic Subunit, Chain A, domain 1"/>
    <property type="match status" value="1"/>
</dbReference>
<dbReference type="InterPro" id="IPR040352">
    <property type="entry name" value="TMUB1/2"/>
</dbReference>
<dbReference type="InterPro" id="IPR000626">
    <property type="entry name" value="Ubiquitin-like_dom"/>
</dbReference>
<dbReference type="InterPro" id="IPR029071">
    <property type="entry name" value="Ubiquitin-like_domsf"/>
</dbReference>
<dbReference type="PANTHER" id="PTHR14557">
    <property type="entry name" value="PROTEIN C7ORF21"/>
    <property type="match status" value="1"/>
</dbReference>
<dbReference type="PANTHER" id="PTHR14557:SF3">
    <property type="entry name" value="TRANSMEMBRANE AND UBIQUITIN-LIKE DOMAIN-CONTAINING PROTEIN 1"/>
    <property type="match status" value="1"/>
</dbReference>
<dbReference type="Pfam" id="PF00240">
    <property type="entry name" value="ubiquitin"/>
    <property type="match status" value="1"/>
</dbReference>
<dbReference type="SMART" id="SM00213">
    <property type="entry name" value="UBQ"/>
    <property type="match status" value="1"/>
</dbReference>
<dbReference type="SUPFAM" id="SSF54236">
    <property type="entry name" value="Ubiquitin-like"/>
    <property type="match status" value="1"/>
</dbReference>
<dbReference type="PROSITE" id="PS50053">
    <property type="entry name" value="UBIQUITIN_2"/>
    <property type="match status" value="1"/>
</dbReference>
<feature type="chain" id="PRO_0000114923" description="Transmembrane and ubiquitin-like domain-containing protein 1">
    <location>
        <begin position="1"/>
        <end position="245"/>
    </location>
</feature>
<feature type="chain" id="PRO_0000435489" description="iHOPS">
    <location>
        <begin status="unknown"/>
        <end position="245"/>
    </location>
</feature>
<feature type="transmembrane region" description="Helical" evidence="3">
    <location>
        <begin position="11"/>
        <end position="31"/>
    </location>
</feature>
<feature type="transmembrane region" description="Helical" evidence="3">
    <location>
        <begin position="194"/>
        <end position="214"/>
    </location>
</feature>
<feature type="transmembrane region" description="Helical" evidence="3">
    <location>
        <begin position="219"/>
        <end position="239"/>
    </location>
</feature>
<feature type="domain" description="Ubiquitin-like" evidence="4">
    <location>
        <begin position="102"/>
        <end position="175"/>
    </location>
</feature>
<feature type="region of interest" description="Required to release iHOPS from membranes" evidence="11">
    <location>
        <begin position="2"/>
        <end position="30"/>
    </location>
</feature>
<feature type="region of interest" description="Disordered" evidence="5">
    <location>
        <begin position="33"/>
        <end position="100"/>
    </location>
</feature>
<feature type="modified residue" description="Phosphoserine" evidence="2">
    <location>
        <position position="73"/>
    </location>
</feature>
<feature type="modified residue" description="Phosphoserine" evidence="2">
    <location>
        <position position="97"/>
    </location>
</feature>
<feature type="modified residue" description="Phosphoserine" evidence="2">
    <location>
        <position position="126"/>
    </location>
</feature>
<feature type="splice variant" id="VSP_058102" description="In isoform 2." evidence="12">
    <location>
        <begin position="1"/>
        <end position="55"/>
    </location>
</feature>
<feature type="sequence conflict" description="In Ref. 2; AAU00155." evidence="13" ref="2">
    <original>L</original>
    <variation>Q</variation>
    <location>
        <position position="233"/>
    </location>
</feature>
<keyword id="KW-0024">Alternative initiation</keyword>
<keyword id="KW-1003">Cell membrane</keyword>
<keyword id="KW-0963">Cytoplasm</keyword>
<keyword id="KW-0206">Cytoskeleton</keyword>
<keyword id="KW-0967">Endosome</keyword>
<keyword id="KW-0472">Membrane</keyword>
<keyword id="KW-0539">Nucleus</keyword>
<keyword id="KW-0597">Phosphoprotein</keyword>
<keyword id="KW-0628">Postsynaptic cell membrane</keyword>
<keyword id="KW-1185">Reference proteome</keyword>
<keyword id="KW-0770">Synapse</keyword>
<keyword id="KW-0812">Transmembrane</keyword>
<keyword id="KW-1133">Transmembrane helix</keyword>
<organism>
    <name type="scientific">Mus musculus</name>
    <name type="common">Mouse</name>
    <dbReference type="NCBI Taxonomy" id="10090"/>
    <lineage>
        <taxon>Eukaryota</taxon>
        <taxon>Metazoa</taxon>
        <taxon>Chordata</taxon>
        <taxon>Craniata</taxon>
        <taxon>Vertebrata</taxon>
        <taxon>Euteleostomi</taxon>
        <taxon>Mammalia</taxon>
        <taxon>Eutheria</taxon>
        <taxon>Euarchontoglires</taxon>
        <taxon>Glires</taxon>
        <taxon>Rodentia</taxon>
        <taxon>Myomorpha</taxon>
        <taxon>Muroidea</taxon>
        <taxon>Muridae</taxon>
        <taxon>Murinae</taxon>
        <taxon>Mus</taxon>
        <taxon>Mus</taxon>
    </lineage>
</organism>
<proteinExistence type="evidence at protein level"/>
<sequence>MALIEGVGDEVTVLFAVLACLLVLALAWVSTHTTESTDPQPQPPGTTTPAQPSEAMSASDSIREEAPGAESPSLRHRGPSAQPEPDTGVTASTPPDSPQEPLLLRLKFLNDSEQVARAWPQDTIGSLKRTQFPGQEQQVRLIYQGQLLGDDTQTLGSLHLPPNCVLHCHVSTRVGPPHPPCPPGSEPGPSGLEIGSLLLPLLLLLLLLLWYCQIQYRPFFPLTATLGLAGFTLLLSLLAFAMYRP</sequence>
<gene>
    <name type="primary">Tmub1</name>
    <name type="synonym">Hops</name>
</gene>
<accession>Q9JMG3</accession>
<accession>Q53AQ3</accession>
<evidence type="ECO:0000250" key="1">
    <source>
        <dbReference type="UniProtKB" id="Q53AQ4"/>
    </source>
</evidence>
<evidence type="ECO:0000250" key="2">
    <source>
        <dbReference type="UniProtKB" id="Q9BVT8"/>
    </source>
</evidence>
<evidence type="ECO:0000255" key="3"/>
<evidence type="ECO:0000255" key="4">
    <source>
        <dbReference type="PROSITE-ProRule" id="PRU00214"/>
    </source>
</evidence>
<evidence type="ECO:0000256" key="5">
    <source>
        <dbReference type="SAM" id="MobiDB-lite"/>
    </source>
</evidence>
<evidence type="ECO:0000269" key="6">
    <source>
    </source>
</evidence>
<evidence type="ECO:0000269" key="7">
    <source>
    </source>
</evidence>
<evidence type="ECO:0000269" key="8">
    <source>
    </source>
</evidence>
<evidence type="ECO:0000269" key="9">
    <source>
    </source>
</evidence>
<evidence type="ECO:0000269" key="10">
    <source>
    </source>
</evidence>
<evidence type="ECO:0000269" key="11">
    <source>
    </source>
</evidence>
<evidence type="ECO:0000303" key="12">
    <source>
    </source>
</evidence>
<evidence type="ECO:0000305" key="13"/>
<evidence type="ECO:0000305" key="14">
    <source>
    </source>
</evidence>
<reference key="1">
    <citation type="journal article" date="2000" name="Biochem. Biophys. Res. Commun.">
        <title>Growth suppression of Escherichia coli by induction of expression of mammalian genes with transmembrane or ATPase domains.</title>
        <authorList>
            <person name="Inoue S."/>
            <person name="Sano H."/>
            <person name="Ohta M."/>
        </authorList>
    </citation>
    <scope>NUCLEOTIDE SEQUENCE [MRNA]</scope>
    <source>
        <tissue>Brain</tissue>
    </source>
</reference>
<reference key="2">
    <citation type="journal article" date="2005" name="J. Cell Sci.">
        <title>HOPS: a novel cAMP-dependent shuttling protein involved in protein synthesis regulation.</title>
        <authorList>
            <person name="Della Fazia M.A."/>
            <person name="Castelli M."/>
            <person name="Bartoli D."/>
            <person name="Pieroni S."/>
            <person name="Pettirossi V."/>
            <person name="Piobbico D."/>
            <person name="Viola-Magni M."/>
            <person name="Servillo G."/>
        </authorList>
    </citation>
    <scope>NUCLEOTIDE SEQUENCE [MRNA]</scope>
    <scope>INDUCTION</scope>
    <scope>SUBCELLULAR LOCATION</scope>
    <scope>INTERACTION WITH EEF1A1</scope>
    <scope>FUNCTION</scope>
    <source>
        <strain>BALB/cJ</strain>
        <tissue>Brain</tissue>
    </source>
</reference>
<reference key="3">
    <citation type="journal article" date="2005" name="Science">
        <title>The transcriptional landscape of the mammalian genome.</title>
        <authorList>
            <person name="Carninci P."/>
            <person name="Kasukawa T."/>
            <person name="Katayama S."/>
            <person name="Gough J."/>
            <person name="Frith M.C."/>
            <person name="Maeda N."/>
            <person name="Oyama R."/>
            <person name="Ravasi T."/>
            <person name="Lenhard B."/>
            <person name="Wells C."/>
            <person name="Kodzius R."/>
            <person name="Shimokawa K."/>
            <person name="Bajic V.B."/>
            <person name="Brenner S.E."/>
            <person name="Batalov S."/>
            <person name="Forrest A.R."/>
            <person name="Zavolan M."/>
            <person name="Davis M.J."/>
            <person name="Wilming L.G."/>
            <person name="Aidinis V."/>
            <person name="Allen J.E."/>
            <person name="Ambesi-Impiombato A."/>
            <person name="Apweiler R."/>
            <person name="Aturaliya R.N."/>
            <person name="Bailey T.L."/>
            <person name="Bansal M."/>
            <person name="Baxter L."/>
            <person name="Beisel K.W."/>
            <person name="Bersano T."/>
            <person name="Bono H."/>
            <person name="Chalk A.M."/>
            <person name="Chiu K.P."/>
            <person name="Choudhary V."/>
            <person name="Christoffels A."/>
            <person name="Clutterbuck D.R."/>
            <person name="Crowe M.L."/>
            <person name="Dalla E."/>
            <person name="Dalrymple B.P."/>
            <person name="de Bono B."/>
            <person name="Della Gatta G."/>
            <person name="di Bernardo D."/>
            <person name="Down T."/>
            <person name="Engstrom P."/>
            <person name="Fagiolini M."/>
            <person name="Faulkner G."/>
            <person name="Fletcher C.F."/>
            <person name="Fukushima T."/>
            <person name="Furuno M."/>
            <person name="Futaki S."/>
            <person name="Gariboldi M."/>
            <person name="Georgii-Hemming P."/>
            <person name="Gingeras T.R."/>
            <person name="Gojobori T."/>
            <person name="Green R.E."/>
            <person name="Gustincich S."/>
            <person name="Harbers M."/>
            <person name="Hayashi Y."/>
            <person name="Hensch T.K."/>
            <person name="Hirokawa N."/>
            <person name="Hill D."/>
            <person name="Huminiecki L."/>
            <person name="Iacono M."/>
            <person name="Ikeo K."/>
            <person name="Iwama A."/>
            <person name="Ishikawa T."/>
            <person name="Jakt M."/>
            <person name="Kanapin A."/>
            <person name="Katoh M."/>
            <person name="Kawasawa Y."/>
            <person name="Kelso J."/>
            <person name="Kitamura H."/>
            <person name="Kitano H."/>
            <person name="Kollias G."/>
            <person name="Krishnan S.P."/>
            <person name="Kruger A."/>
            <person name="Kummerfeld S.K."/>
            <person name="Kurochkin I.V."/>
            <person name="Lareau L.F."/>
            <person name="Lazarevic D."/>
            <person name="Lipovich L."/>
            <person name="Liu J."/>
            <person name="Liuni S."/>
            <person name="McWilliam S."/>
            <person name="Madan Babu M."/>
            <person name="Madera M."/>
            <person name="Marchionni L."/>
            <person name="Matsuda H."/>
            <person name="Matsuzawa S."/>
            <person name="Miki H."/>
            <person name="Mignone F."/>
            <person name="Miyake S."/>
            <person name="Morris K."/>
            <person name="Mottagui-Tabar S."/>
            <person name="Mulder N."/>
            <person name="Nakano N."/>
            <person name="Nakauchi H."/>
            <person name="Ng P."/>
            <person name="Nilsson R."/>
            <person name="Nishiguchi S."/>
            <person name="Nishikawa S."/>
            <person name="Nori F."/>
            <person name="Ohara O."/>
            <person name="Okazaki Y."/>
            <person name="Orlando V."/>
            <person name="Pang K.C."/>
            <person name="Pavan W.J."/>
            <person name="Pavesi G."/>
            <person name="Pesole G."/>
            <person name="Petrovsky N."/>
            <person name="Piazza S."/>
            <person name="Reed J."/>
            <person name="Reid J.F."/>
            <person name="Ring B.Z."/>
            <person name="Ringwald M."/>
            <person name="Rost B."/>
            <person name="Ruan Y."/>
            <person name="Salzberg S.L."/>
            <person name="Sandelin A."/>
            <person name="Schneider C."/>
            <person name="Schoenbach C."/>
            <person name="Sekiguchi K."/>
            <person name="Semple C.A."/>
            <person name="Seno S."/>
            <person name="Sessa L."/>
            <person name="Sheng Y."/>
            <person name="Shibata Y."/>
            <person name="Shimada H."/>
            <person name="Shimada K."/>
            <person name="Silva D."/>
            <person name="Sinclair B."/>
            <person name="Sperling S."/>
            <person name="Stupka E."/>
            <person name="Sugiura K."/>
            <person name="Sultana R."/>
            <person name="Takenaka Y."/>
            <person name="Taki K."/>
            <person name="Tammoja K."/>
            <person name="Tan S.L."/>
            <person name="Tang S."/>
            <person name="Taylor M.S."/>
            <person name="Tegner J."/>
            <person name="Teichmann S.A."/>
            <person name="Ueda H.R."/>
            <person name="van Nimwegen E."/>
            <person name="Verardo R."/>
            <person name="Wei C.L."/>
            <person name="Yagi K."/>
            <person name="Yamanishi H."/>
            <person name="Zabarovsky E."/>
            <person name="Zhu S."/>
            <person name="Zimmer A."/>
            <person name="Hide W."/>
            <person name="Bult C."/>
            <person name="Grimmond S.M."/>
            <person name="Teasdale R.D."/>
            <person name="Liu E.T."/>
            <person name="Brusic V."/>
            <person name="Quackenbush J."/>
            <person name="Wahlestedt C."/>
            <person name="Mattick J.S."/>
            <person name="Hume D.A."/>
            <person name="Kai C."/>
            <person name="Sasaki D."/>
            <person name="Tomaru Y."/>
            <person name="Fukuda S."/>
            <person name="Kanamori-Katayama M."/>
            <person name="Suzuki M."/>
            <person name="Aoki J."/>
            <person name="Arakawa T."/>
            <person name="Iida J."/>
            <person name="Imamura K."/>
            <person name="Itoh M."/>
            <person name="Kato T."/>
            <person name="Kawaji H."/>
            <person name="Kawagashira N."/>
            <person name="Kawashima T."/>
            <person name="Kojima M."/>
            <person name="Kondo S."/>
            <person name="Konno H."/>
            <person name="Nakano K."/>
            <person name="Ninomiya N."/>
            <person name="Nishio T."/>
            <person name="Okada M."/>
            <person name="Plessy C."/>
            <person name="Shibata K."/>
            <person name="Shiraki T."/>
            <person name="Suzuki S."/>
            <person name="Tagami M."/>
            <person name="Waki K."/>
            <person name="Watahiki A."/>
            <person name="Okamura-Oho Y."/>
            <person name="Suzuki H."/>
            <person name="Kawai J."/>
            <person name="Hayashizaki Y."/>
        </authorList>
    </citation>
    <scope>NUCLEOTIDE SEQUENCE [LARGE SCALE MRNA]</scope>
    <source>
        <strain>C57BL/6J</strain>
        <tissue>Small intestine</tissue>
    </source>
</reference>
<reference key="4">
    <citation type="journal article" date="2004" name="Genome Res.">
        <title>The status, quality, and expansion of the NIH full-length cDNA project: the Mammalian Gene Collection (MGC).</title>
        <authorList>
            <consortium name="The MGC Project Team"/>
        </authorList>
    </citation>
    <scope>NUCLEOTIDE SEQUENCE [LARGE SCALE MRNA]</scope>
    <source>
        <tissue>Salivary gland</tissue>
    </source>
</reference>
<reference key="5">
    <citation type="journal article" date="2008" name="Cell Cycle">
        <title>HOPS is an essential constituent of centrosome assembly.</title>
        <authorList>
            <person name="Pieroni S."/>
            <person name="Della Fazia M.A."/>
            <person name="Castelli M."/>
            <person name="Piobbico D."/>
            <person name="Bartoli D."/>
            <person name="Brunacci C."/>
            <person name="Bellet M.M."/>
            <person name="Viola-Magni M."/>
            <person name="Servillo G."/>
        </authorList>
    </citation>
    <scope>FUNCTION</scope>
</reference>
<reference key="6">
    <citation type="journal article" date="2008" name="PLoS ONE">
        <title>Transmembrane and ubiquitin-like domain-containing protein 1 (Tmub1/HOPS) facilitates surface expression of GluR2-containing AMPA receptors.</title>
        <authorList>
            <person name="Yang H."/>
            <person name="Takagi H."/>
            <person name="Konishi Y."/>
            <person name="Ageta H."/>
            <person name="Ikegami K."/>
            <person name="Yao I."/>
            <person name="Sato S."/>
            <person name="Hatanaka K."/>
            <person name="Inokuchi K."/>
            <person name="Seog D.H."/>
            <person name="Setou M."/>
        </authorList>
    </citation>
    <scope>TISSUE SPECIFICITY</scope>
    <scope>SUBCELLULAR LOCATION</scope>
    <scope>INTERACTION WITH GRIA2 AND GRIP1</scope>
</reference>
<reference key="7">
    <citation type="journal article" date="2010" name="Cell">
        <title>A tissue-specific atlas of mouse protein phosphorylation and expression.</title>
        <authorList>
            <person name="Huttlin E.L."/>
            <person name="Jedrychowski M.P."/>
            <person name="Elias J.E."/>
            <person name="Goswami T."/>
            <person name="Rad R."/>
            <person name="Beausoleil S.A."/>
            <person name="Villen J."/>
            <person name="Haas W."/>
            <person name="Sowa M.E."/>
            <person name="Gygi S.P."/>
        </authorList>
    </citation>
    <scope>IDENTIFICATION BY MASS SPECTROMETRY [LARGE SCALE ANALYSIS]</scope>
    <source>
        <tissue>Brain</tissue>
    </source>
</reference>
<reference key="8">
    <citation type="journal article" date="2010" name="PLoS ONE">
        <title>Transmembrane and ubiquitin-like domain containing 1 (Tmub1) regulates locomotor activity and wakefulness in mice and interacts with CAMLG.</title>
        <authorList>
            <person name="Zhang W."/>
            <person name="Savelieva K.V."/>
            <person name="Suwanichkul A."/>
            <person name="Small D.L."/>
            <person name="Kirkpatrick L.L."/>
            <person name="Xu N."/>
            <person name="Lanthorn T.H."/>
            <person name="Ye G.L."/>
        </authorList>
    </citation>
    <scope>SUBCELLULAR LOCATION</scope>
    <scope>INTERACTION WITH CAMLG</scope>
    <scope>DISRUPTION PHENOTYPE</scope>
    <scope>TISSUE SPECIFICITY</scope>
</reference>
<reference key="9">
    <citation type="journal article" date="2013" name="Oncogene">
        <title>Hepatocyte odd protein shuttling (HOPS) is a bridging protein in the nucleophosmin-p19 Arf network.</title>
        <authorList>
            <person name="Castelli M."/>
            <person name="Pieroni S."/>
            <person name="Brunacci C."/>
            <person name="Piobbico D."/>
            <person name="Bartoli D."/>
            <person name="Bellet M.M."/>
            <person name="Colombo E."/>
            <person name="Pelicci P.G."/>
            <person name="Della Fazia M.A."/>
            <person name="Servillo G."/>
        </authorList>
    </citation>
    <scope>FUNCTION</scope>
    <scope>SUBCELLULAR LOCATION</scope>
    <scope>INTERACTION WITH NPM1 AND CDKN2A</scope>
</reference>
<reference key="10">
    <citation type="journal article" date="2014" name="Cell Cycle">
        <title>Different functions of HOPS isoforms in the cell: HOPS shuttling isoform is determined by RIP cleavage system.</title>
        <authorList>
            <person name="Castelli M."/>
            <person name="Piobbico D."/>
            <person name="Bartoli D."/>
            <person name="Pieroni S."/>
            <person name="Brunacci C."/>
            <person name="Bellet M.M."/>
            <person name="Chiacchiaretta M."/>
            <person name="Della Fazia M.A."/>
            <person name="Servillo G."/>
        </authorList>
    </citation>
    <scope>ALTERNATIVE SPLICING</scope>
    <scope>SUBCELLULAR LOCATION (IHOPS)</scope>
    <scope>INTERACTION WITH NPM</scope>
    <scope>PROTEOLYTIC CLEAVAGE (IHOPS)</scope>
    <scope>TISSUE SPECIFICITY</scope>
</reference>